<name>VATA_CLOBL</name>
<accession>A7GGL4</accession>
<reference key="1">
    <citation type="submission" date="2007-06" db="EMBL/GenBank/DDBJ databases">
        <authorList>
            <person name="Brinkac L.M."/>
            <person name="Daugherty S."/>
            <person name="Dodson R.J."/>
            <person name="Madupu R."/>
            <person name="Brown J.L."/>
            <person name="Bruce D."/>
            <person name="Detter C."/>
            <person name="Munk C."/>
            <person name="Smith L.A."/>
            <person name="Smith T.J."/>
            <person name="White O."/>
            <person name="Brettin T.S."/>
        </authorList>
    </citation>
    <scope>NUCLEOTIDE SEQUENCE [LARGE SCALE GENOMIC DNA]</scope>
    <source>
        <strain>Langeland / NCTC 10281 / Type F</strain>
    </source>
</reference>
<evidence type="ECO:0000255" key="1">
    <source>
        <dbReference type="HAMAP-Rule" id="MF_00309"/>
    </source>
</evidence>
<evidence type="ECO:0000305" key="2"/>
<dbReference type="EC" id="7.1.2.2" evidence="1"/>
<dbReference type="EMBL" id="CP000728">
    <property type="protein sequence ID" value="ABS41807.1"/>
    <property type="status" value="ALT_INIT"/>
    <property type="molecule type" value="Genomic_DNA"/>
</dbReference>
<dbReference type="RefSeq" id="WP_041173237.1">
    <property type="nucleotide sequence ID" value="NC_009699.1"/>
</dbReference>
<dbReference type="SMR" id="A7GGL4"/>
<dbReference type="KEGG" id="cbf:CLI_2690"/>
<dbReference type="HOGENOM" id="CLU_008162_3_1_9"/>
<dbReference type="Proteomes" id="UP000002410">
    <property type="component" value="Chromosome"/>
</dbReference>
<dbReference type="GO" id="GO:0045259">
    <property type="term" value="C:proton-transporting ATP synthase complex"/>
    <property type="evidence" value="ECO:0007669"/>
    <property type="project" value="UniProtKB-ARBA"/>
</dbReference>
<dbReference type="GO" id="GO:0005524">
    <property type="term" value="F:ATP binding"/>
    <property type="evidence" value="ECO:0007669"/>
    <property type="project" value="UniProtKB-UniRule"/>
</dbReference>
<dbReference type="GO" id="GO:0046933">
    <property type="term" value="F:proton-transporting ATP synthase activity, rotational mechanism"/>
    <property type="evidence" value="ECO:0007669"/>
    <property type="project" value="UniProtKB-UniRule"/>
</dbReference>
<dbReference type="GO" id="GO:0046961">
    <property type="term" value="F:proton-transporting ATPase activity, rotational mechanism"/>
    <property type="evidence" value="ECO:0007669"/>
    <property type="project" value="InterPro"/>
</dbReference>
<dbReference type="GO" id="GO:0042777">
    <property type="term" value="P:proton motive force-driven plasma membrane ATP synthesis"/>
    <property type="evidence" value="ECO:0007669"/>
    <property type="project" value="UniProtKB-UniRule"/>
</dbReference>
<dbReference type="CDD" id="cd18111">
    <property type="entry name" value="ATP-synt_V_A-type_alpha_C"/>
    <property type="match status" value="1"/>
</dbReference>
<dbReference type="CDD" id="cd18119">
    <property type="entry name" value="ATP-synt_V_A-type_alpha_N"/>
    <property type="match status" value="1"/>
</dbReference>
<dbReference type="CDD" id="cd01134">
    <property type="entry name" value="V_A-ATPase_A"/>
    <property type="match status" value="1"/>
</dbReference>
<dbReference type="FunFam" id="3.40.50.300:FF:000675">
    <property type="entry name" value="V-type ATP synthase alpha chain"/>
    <property type="match status" value="1"/>
</dbReference>
<dbReference type="FunFam" id="1.10.1140.10:FF:000002">
    <property type="entry name" value="V-type proton ATPase catalytic subunit A"/>
    <property type="match status" value="1"/>
</dbReference>
<dbReference type="FunFam" id="2.40.30.20:FF:000002">
    <property type="entry name" value="V-type proton ATPase catalytic subunit A"/>
    <property type="match status" value="1"/>
</dbReference>
<dbReference type="FunFam" id="2.40.50.100:FF:000008">
    <property type="entry name" value="V-type proton ATPase catalytic subunit A"/>
    <property type="match status" value="1"/>
</dbReference>
<dbReference type="Gene3D" id="2.40.30.20">
    <property type="match status" value="1"/>
</dbReference>
<dbReference type="Gene3D" id="2.40.50.100">
    <property type="match status" value="1"/>
</dbReference>
<dbReference type="Gene3D" id="1.10.1140.10">
    <property type="entry name" value="Bovine Mitochondrial F1-atpase, Atp Synthase Beta Chain, Chain D, domain 3"/>
    <property type="match status" value="1"/>
</dbReference>
<dbReference type="Gene3D" id="3.40.50.300">
    <property type="entry name" value="P-loop containing nucleotide triphosphate hydrolases"/>
    <property type="match status" value="1"/>
</dbReference>
<dbReference type="HAMAP" id="MF_00309">
    <property type="entry name" value="ATP_synth_A_arch"/>
    <property type="match status" value="1"/>
</dbReference>
<dbReference type="InterPro" id="IPR055190">
    <property type="entry name" value="ATP-synt_VA_C"/>
</dbReference>
<dbReference type="InterPro" id="IPR031686">
    <property type="entry name" value="ATP-synth_a_Xtn"/>
</dbReference>
<dbReference type="InterPro" id="IPR023366">
    <property type="entry name" value="ATP_synth_asu-like_sf"/>
</dbReference>
<dbReference type="InterPro" id="IPR020003">
    <property type="entry name" value="ATPase_a/bsu_AS"/>
</dbReference>
<dbReference type="InterPro" id="IPR004100">
    <property type="entry name" value="ATPase_F1/V1/A1_a/bsu_N"/>
</dbReference>
<dbReference type="InterPro" id="IPR036121">
    <property type="entry name" value="ATPase_F1/V1/A1_a/bsu_N_sf"/>
</dbReference>
<dbReference type="InterPro" id="IPR000194">
    <property type="entry name" value="ATPase_F1/V1/A1_a/bsu_nucl-bd"/>
</dbReference>
<dbReference type="InterPro" id="IPR024034">
    <property type="entry name" value="ATPase_F1/V1_b/a_C"/>
</dbReference>
<dbReference type="InterPro" id="IPR027417">
    <property type="entry name" value="P-loop_NTPase"/>
</dbReference>
<dbReference type="InterPro" id="IPR022878">
    <property type="entry name" value="V-ATPase_asu"/>
</dbReference>
<dbReference type="NCBIfam" id="NF003220">
    <property type="entry name" value="PRK04192.1"/>
    <property type="match status" value="1"/>
</dbReference>
<dbReference type="PANTHER" id="PTHR43607:SF1">
    <property type="entry name" value="H(+)-TRANSPORTING TWO-SECTOR ATPASE"/>
    <property type="match status" value="1"/>
</dbReference>
<dbReference type="PANTHER" id="PTHR43607">
    <property type="entry name" value="V-TYPE PROTON ATPASE CATALYTIC SUBUNIT A"/>
    <property type="match status" value="1"/>
</dbReference>
<dbReference type="Pfam" id="PF00006">
    <property type="entry name" value="ATP-synt_ab"/>
    <property type="match status" value="1"/>
</dbReference>
<dbReference type="Pfam" id="PF02874">
    <property type="entry name" value="ATP-synt_ab_N"/>
    <property type="match status" value="1"/>
</dbReference>
<dbReference type="Pfam" id="PF16886">
    <property type="entry name" value="ATP-synt_ab_Xtn"/>
    <property type="match status" value="1"/>
</dbReference>
<dbReference type="Pfam" id="PF22919">
    <property type="entry name" value="ATP-synt_VA_C"/>
    <property type="match status" value="1"/>
</dbReference>
<dbReference type="SUPFAM" id="SSF47917">
    <property type="entry name" value="C-terminal domain of alpha and beta subunits of F1 ATP synthase"/>
    <property type="match status" value="1"/>
</dbReference>
<dbReference type="SUPFAM" id="SSF50615">
    <property type="entry name" value="N-terminal domain of alpha and beta subunits of F1 ATP synthase"/>
    <property type="match status" value="1"/>
</dbReference>
<dbReference type="SUPFAM" id="SSF52540">
    <property type="entry name" value="P-loop containing nucleoside triphosphate hydrolases"/>
    <property type="match status" value="1"/>
</dbReference>
<dbReference type="PROSITE" id="PS00152">
    <property type="entry name" value="ATPASE_ALPHA_BETA"/>
    <property type="match status" value="1"/>
</dbReference>
<gene>
    <name evidence="1" type="primary">atpA</name>
    <name type="ordered locus">CLI_2690</name>
</gene>
<comment type="function">
    <text evidence="1">Produces ATP from ADP in the presence of a proton gradient across the membrane. The V-type alpha chain is a catalytic subunit.</text>
</comment>
<comment type="catalytic activity">
    <reaction evidence="1">
        <text>ATP + H2O + 4 H(+)(in) = ADP + phosphate + 5 H(+)(out)</text>
        <dbReference type="Rhea" id="RHEA:57720"/>
        <dbReference type="ChEBI" id="CHEBI:15377"/>
        <dbReference type="ChEBI" id="CHEBI:15378"/>
        <dbReference type="ChEBI" id="CHEBI:30616"/>
        <dbReference type="ChEBI" id="CHEBI:43474"/>
        <dbReference type="ChEBI" id="CHEBI:456216"/>
        <dbReference type="EC" id="7.1.2.2"/>
    </reaction>
</comment>
<comment type="similarity">
    <text evidence="1">Belongs to the ATPase alpha/beta chains family.</text>
</comment>
<comment type="sequence caution" evidence="2">
    <conflict type="erroneous initiation">
        <sequence resource="EMBL-CDS" id="ABS41807"/>
    </conflict>
</comment>
<sequence>MKTGRVLKISGPLVVAEGMEEANIYDVVKVGEKRLIGEIIEMREDRASIQVYEETAGLAPGDPVITTGEPLSVELGPGLIEAMFDGIQRPLNAIKAKAGDFITRGVEVHSLDRDRKWHFTPVKKVGDTVEAGDVIGIVQETSIVEHKIMVPYGIKGTIETIEEGDFTVVDTVAKVKDKDKVSDLIMMQKWPVRRGRPYGRKLNPVEPMITGQRVIDTFFPVTKGGTACVPGPFGSGKTVVQHQLAKWADAQIVVYIGCGERGNEMTDVLNEFPELKDPKTGEPLMKRTVLIANTSNMPVAAREASIYTGITIGEYFRDMGYSVALMADSTSRWAEALREMSGRLEEMPGDEGYPAYLGSRAADFYERAGKVLSLGSEGREGALTVIGAVSPPGGDLSEPVTQATLRIVKVFWGLDSQLAYRRHFPAINWLNSYSLYLEKISPWMDENVASDWTALRTRAMSLLQEEANLEEIVRLVGIDALSEKDRLKLEVAKSLREDYLQQNAFHEVDTYASLEKQYKMLKLVLFFYDETQRALNAGIYLKELLDLEVRDKIARAKYISEESIENIDAIFNELSEVIDELISKGGIMNA</sequence>
<organism>
    <name type="scientific">Clostridium botulinum (strain Langeland / NCTC 10281 / Type F)</name>
    <dbReference type="NCBI Taxonomy" id="441772"/>
    <lineage>
        <taxon>Bacteria</taxon>
        <taxon>Bacillati</taxon>
        <taxon>Bacillota</taxon>
        <taxon>Clostridia</taxon>
        <taxon>Eubacteriales</taxon>
        <taxon>Clostridiaceae</taxon>
        <taxon>Clostridium</taxon>
    </lineage>
</organism>
<keyword id="KW-0066">ATP synthesis</keyword>
<keyword id="KW-0067">ATP-binding</keyword>
<keyword id="KW-0375">Hydrogen ion transport</keyword>
<keyword id="KW-0406">Ion transport</keyword>
<keyword id="KW-0547">Nucleotide-binding</keyword>
<keyword id="KW-1278">Translocase</keyword>
<keyword id="KW-0813">Transport</keyword>
<feature type="chain" id="PRO_0000322462" description="V-type ATP synthase alpha chain">
    <location>
        <begin position="1"/>
        <end position="590"/>
    </location>
</feature>
<feature type="binding site" evidence="1">
    <location>
        <begin position="231"/>
        <end position="238"/>
    </location>
    <ligand>
        <name>ATP</name>
        <dbReference type="ChEBI" id="CHEBI:30616"/>
    </ligand>
</feature>
<protein>
    <recommendedName>
        <fullName evidence="1">V-type ATP synthase alpha chain</fullName>
        <ecNumber evidence="1">7.1.2.2</ecNumber>
    </recommendedName>
    <alternativeName>
        <fullName evidence="1">V-ATPase subunit A</fullName>
    </alternativeName>
</protein>
<proteinExistence type="inferred from homology"/>